<name>OLEO7_GOSHI</name>
<keyword id="KW-0007">Acetylation</keyword>
<keyword id="KW-0551">Lipid droplet</keyword>
<keyword id="KW-0472">Membrane</keyword>
<keyword id="KW-1185">Reference proteome</keyword>
<keyword id="KW-0812">Transmembrane</keyword>
<keyword id="KW-1133">Transmembrane helix</keyword>
<sequence length="154" mass="16398">MADRDRSYRTFDQVVRGDRTNYQSGPSTTQVLTVLTLLPIGGTLLALAGLTLTGTVIGLCMATPLFVIFSPVLVPAAIAVFMAVAGFLSSGAFGLTGLSSLSYVFNRFRQATGTEQLDADRAKRGMQDMVGYVGQKTKETGQTIENKAHEGGRT</sequence>
<protein>
    <recommendedName>
        <fullName>Oleosin 16.4 kDa</fullName>
    </recommendedName>
</protein>
<comment type="function">
    <text evidence="1">May have a structural role to stabilize the lipid body during desiccation of the seed by preventing coalescence of the oil. Probably interacts with both lipid and phospholipid moieties of lipid bodies. May also provide recognition signals for specific lipase anchorage in lipolysis during seedling growth (By similarity).</text>
</comment>
<comment type="subcellular location">
    <subcellularLocation>
        <location evidence="1">Lipid droplet</location>
    </subcellularLocation>
    <subcellularLocation>
        <location evidence="1">Membrane</location>
        <topology evidence="1">Multi-pass membrane protein</topology>
    </subcellularLocation>
    <text evidence="1">Surface of oil bodies. Oleosins exist at a monolayer lipid/water interface (By similarity).</text>
</comment>
<comment type="similarity">
    <text evidence="3">Belongs to the oleosin family.</text>
</comment>
<dbReference type="EMBL" id="L00934">
    <property type="protein sequence ID" value="AAA18523.1"/>
    <property type="molecule type" value="mRNA"/>
</dbReference>
<dbReference type="PIR" id="T10784">
    <property type="entry name" value="T10784"/>
</dbReference>
<dbReference type="RefSeq" id="XP_016668316.1">
    <property type="nucleotide sequence ID" value="XM_016812827.1"/>
</dbReference>
<dbReference type="STRING" id="3635.P29528"/>
<dbReference type="PaxDb" id="3635-P29528"/>
<dbReference type="KEGG" id="ghi:107888658"/>
<dbReference type="OMA" id="MSWVLNY"/>
<dbReference type="Proteomes" id="UP000189702">
    <property type="component" value="Chromosome 13"/>
</dbReference>
<dbReference type="GO" id="GO:0016020">
    <property type="term" value="C:membrane"/>
    <property type="evidence" value="ECO:0007669"/>
    <property type="project" value="UniProtKB-SubCell"/>
</dbReference>
<dbReference type="GO" id="GO:0012511">
    <property type="term" value="C:monolayer-surrounded lipid storage body"/>
    <property type="evidence" value="ECO:0000318"/>
    <property type="project" value="GO_Central"/>
</dbReference>
<dbReference type="GO" id="GO:0019915">
    <property type="term" value="P:lipid storage"/>
    <property type="evidence" value="ECO:0000318"/>
    <property type="project" value="GO_Central"/>
</dbReference>
<dbReference type="GO" id="GO:0050826">
    <property type="term" value="P:response to freezing"/>
    <property type="evidence" value="ECO:0000318"/>
    <property type="project" value="GO_Central"/>
</dbReference>
<dbReference type="GO" id="GO:0010344">
    <property type="term" value="P:seed oilbody biogenesis"/>
    <property type="evidence" value="ECO:0000318"/>
    <property type="project" value="GO_Central"/>
</dbReference>
<dbReference type="InterPro" id="IPR000136">
    <property type="entry name" value="Oleosin"/>
</dbReference>
<dbReference type="PANTHER" id="PTHR33203">
    <property type="entry name" value="OLEOSIN"/>
    <property type="match status" value="1"/>
</dbReference>
<dbReference type="PANTHER" id="PTHR33203:SF63">
    <property type="entry name" value="OLEOSIN 18.2 KDA"/>
    <property type="match status" value="1"/>
</dbReference>
<dbReference type="Pfam" id="PF01277">
    <property type="entry name" value="Oleosin"/>
    <property type="match status" value="1"/>
</dbReference>
<dbReference type="PROSITE" id="PS00811">
    <property type="entry name" value="OLEOSINS"/>
    <property type="match status" value="1"/>
</dbReference>
<feature type="initiator methionine" description="Removed" evidence="1">
    <location>
        <position position="1"/>
    </location>
</feature>
<feature type="chain" id="PRO_0000108139" description="Oleosin 16.4 kDa">
    <location>
        <begin position="2"/>
        <end position="154"/>
    </location>
</feature>
<feature type="transmembrane region" description="Helical" evidence="2">
    <location>
        <begin position="31"/>
        <end position="51"/>
    </location>
</feature>
<feature type="transmembrane region" description="Helical" evidence="2">
    <location>
        <begin position="65"/>
        <end position="85"/>
    </location>
</feature>
<feature type="transmembrane region" description="Helical" evidence="2">
    <location>
        <begin position="86"/>
        <end position="106"/>
    </location>
</feature>
<feature type="region of interest" description="Polar">
    <location>
        <begin position="2"/>
        <end position="33"/>
    </location>
</feature>
<feature type="region of interest" description="Hydrophobic">
    <location>
        <begin position="34"/>
        <end position="105"/>
    </location>
</feature>
<feature type="modified residue" description="N-acetylalanine" evidence="1">
    <location>
        <position position="2"/>
    </location>
</feature>
<reference key="1">
    <citation type="journal article" date="1993" name="Plant Physiol.">
        <title>Cotton (Gossypium hirsutum) MatP6 and MatP7 oleosin genes.</title>
        <authorList>
            <person name="Hughes D.W."/>
            <person name="Wang H.Y."/>
            <person name="Galau G.A."/>
        </authorList>
    </citation>
    <scope>NUCLEOTIDE SEQUENCE [MRNA]</scope>
    <source>
        <strain>cv. Coker 201</strain>
    </source>
</reference>
<organism>
    <name type="scientific">Gossypium hirsutum</name>
    <name type="common">Upland cotton</name>
    <name type="synonym">Gossypium mexicanum</name>
    <dbReference type="NCBI Taxonomy" id="3635"/>
    <lineage>
        <taxon>Eukaryota</taxon>
        <taxon>Viridiplantae</taxon>
        <taxon>Streptophyta</taxon>
        <taxon>Embryophyta</taxon>
        <taxon>Tracheophyta</taxon>
        <taxon>Spermatophyta</taxon>
        <taxon>Magnoliopsida</taxon>
        <taxon>eudicotyledons</taxon>
        <taxon>Gunneridae</taxon>
        <taxon>Pentapetalae</taxon>
        <taxon>rosids</taxon>
        <taxon>malvids</taxon>
        <taxon>Malvales</taxon>
        <taxon>Malvaceae</taxon>
        <taxon>Malvoideae</taxon>
        <taxon>Gossypium</taxon>
    </lineage>
</organism>
<evidence type="ECO:0000250" key="1"/>
<evidence type="ECO:0000255" key="2"/>
<evidence type="ECO:0000305" key="3"/>
<accession>P29528</accession>
<gene>
    <name type="primary">MATP7</name>
</gene>
<proteinExistence type="evidence at transcript level"/>